<feature type="chain" id="PRO_0000245720" description="NADH-quinone oxidoreductase subunit I 1">
    <location>
        <begin position="1"/>
        <end position="171"/>
    </location>
</feature>
<feature type="domain" description="4Fe-4S ferredoxin-type 1" evidence="1">
    <location>
        <begin position="41"/>
        <end position="71"/>
    </location>
</feature>
<feature type="domain" description="4Fe-4S ferredoxin-type 2" evidence="1">
    <location>
        <begin position="81"/>
        <end position="110"/>
    </location>
</feature>
<feature type="binding site" evidence="1">
    <location>
        <position position="51"/>
    </location>
    <ligand>
        <name>[4Fe-4S] cluster</name>
        <dbReference type="ChEBI" id="CHEBI:49883"/>
        <label>1</label>
    </ligand>
</feature>
<feature type="binding site" evidence="1">
    <location>
        <position position="54"/>
    </location>
    <ligand>
        <name>[4Fe-4S] cluster</name>
        <dbReference type="ChEBI" id="CHEBI:49883"/>
        <label>1</label>
    </ligand>
</feature>
<feature type="binding site" evidence="1">
    <location>
        <position position="57"/>
    </location>
    <ligand>
        <name>[4Fe-4S] cluster</name>
        <dbReference type="ChEBI" id="CHEBI:49883"/>
        <label>1</label>
    </ligand>
</feature>
<feature type="binding site" evidence="1">
    <location>
        <position position="61"/>
    </location>
    <ligand>
        <name>[4Fe-4S] cluster</name>
        <dbReference type="ChEBI" id="CHEBI:49883"/>
        <label>2</label>
    </ligand>
</feature>
<feature type="binding site" evidence="1">
    <location>
        <position position="90"/>
    </location>
    <ligand>
        <name>[4Fe-4S] cluster</name>
        <dbReference type="ChEBI" id="CHEBI:49883"/>
        <label>2</label>
    </ligand>
</feature>
<feature type="binding site" evidence="1">
    <location>
        <position position="93"/>
    </location>
    <ligand>
        <name>[4Fe-4S] cluster</name>
        <dbReference type="ChEBI" id="CHEBI:49883"/>
        <label>2</label>
    </ligand>
</feature>
<feature type="binding site" evidence="1">
    <location>
        <position position="96"/>
    </location>
    <ligand>
        <name>[4Fe-4S] cluster</name>
        <dbReference type="ChEBI" id="CHEBI:49883"/>
        <label>2</label>
    </ligand>
</feature>
<feature type="binding site" evidence="1">
    <location>
        <position position="100"/>
    </location>
    <ligand>
        <name>[4Fe-4S] cluster</name>
        <dbReference type="ChEBI" id="CHEBI:49883"/>
        <label>1</label>
    </ligand>
</feature>
<sequence length="171" mass="19678">MWNSLKTMWIVFLHMFRRRVTIQYPDEMPNIPPRWRGRIILSRDPDGEERCVACYLCAAACPVDCIALQATEDEHERRYPEFFRINFSRCIFCGFCEEACPTDAIQLTPDFEMGEYNRKNLVYEKEDLLIDGTGKYPGYNFYRVAGVAIGGKNKGGAENEAPPVDPHSLLP</sequence>
<organism>
    <name type="scientific">Nitrosospira multiformis (strain ATCC 25196 / NCIMB 11849 / C 71)</name>
    <dbReference type="NCBI Taxonomy" id="323848"/>
    <lineage>
        <taxon>Bacteria</taxon>
        <taxon>Pseudomonadati</taxon>
        <taxon>Pseudomonadota</taxon>
        <taxon>Betaproteobacteria</taxon>
        <taxon>Nitrosomonadales</taxon>
        <taxon>Nitrosomonadaceae</taxon>
        <taxon>Nitrosospira</taxon>
    </lineage>
</organism>
<accession>Q2YA98</accession>
<keyword id="KW-0004">4Fe-4S</keyword>
<keyword id="KW-0997">Cell inner membrane</keyword>
<keyword id="KW-1003">Cell membrane</keyword>
<keyword id="KW-0408">Iron</keyword>
<keyword id="KW-0411">Iron-sulfur</keyword>
<keyword id="KW-0472">Membrane</keyword>
<keyword id="KW-0479">Metal-binding</keyword>
<keyword id="KW-0520">NAD</keyword>
<keyword id="KW-0874">Quinone</keyword>
<keyword id="KW-1185">Reference proteome</keyword>
<keyword id="KW-0677">Repeat</keyword>
<keyword id="KW-1278">Translocase</keyword>
<keyword id="KW-0830">Ubiquinone</keyword>
<comment type="function">
    <text evidence="1">NDH-1 shuttles electrons from NADH, via FMN and iron-sulfur (Fe-S) centers, to quinones in the respiratory chain. The immediate electron acceptor for the enzyme in this species is believed to be ubiquinone. Couples the redox reaction to proton translocation (for every two electrons transferred, four hydrogen ions are translocated across the cytoplasmic membrane), and thus conserves the redox energy in a proton gradient.</text>
</comment>
<comment type="catalytic activity">
    <reaction evidence="1">
        <text>a quinone + NADH + 5 H(+)(in) = a quinol + NAD(+) + 4 H(+)(out)</text>
        <dbReference type="Rhea" id="RHEA:57888"/>
        <dbReference type="ChEBI" id="CHEBI:15378"/>
        <dbReference type="ChEBI" id="CHEBI:24646"/>
        <dbReference type="ChEBI" id="CHEBI:57540"/>
        <dbReference type="ChEBI" id="CHEBI:57945"/>
        <dbReference type="ChEBI" id="CHEBI:132124"/>
    </reaction>
</comment>
<comment type="cofactor">
    <cofactor evidence="1">
        <name>[4Fe-4S] cluster</name>
        <dbReference type="ChEBI" id="CHEBI:49883"/>
    </cofactor>
    <text evidence="1">Binds 2 [4Fe-4S] clusters per subunit.</text>
</comment>
<comment type="subunit">
    <text evidence="1">NDH-1 is composed of 14 different subunits. Subunits NuoA, H, J, K, L, M, N constitute the membrane sector of the complex.</text>
</comment>
<comment type="subcellular location">
    <subcellularLocation>
        <location evidence="1">Cell inner membrane</location>
        <topology evidence="1">Peripheral membrane protein</topology>
    </subcellularLocation>
</comment>
<comment type="similarity">
    <text evidence="1">Belongs to the complex I 23 kDa subunit family.</text>
</comment>
<proteinExistence type="inferred from homology"/>
<evidence type="ECO:0000255" key="1">
    <source>
        <dbReference type="HAMAP-Rule" id="MF_01351"/>
    </source>
</evidence>
<dbReference type="EC" id="7.1.1.-" evidence="1"/>
<dbReference type="EMBL" id="CP000103">
    <property type="protein sequence ID" value="ABB74323.1"/>
    <property type="molecule type" value="Genomic_DNA"/>
</dbReference>
<dbReference type="RefSeq" id="WP_011380368.1">
    <property type="nucleotide sequence ID" value="NC_007614.1"/>
</dbReference>
<dbReference type="SMR" id="Q2YA98"/>
<dbReference type="STRING" id="323848.Nmul_A1020"/>
<dbReference type="KEGG" id="nmu:Nmul_A1020"/>
<dbReference type="eggNOG" id="COG1143">
    <property type="taxonomic scope" value="Bacteria"/>
</dbReference>
<dbReference type="HOGENOM" id="CLU_067218_4_3_4"/>
<dbReference type="OrthoDB" id="9808559at2"/>
<dbReference type="Proteomes" id="UP000002718">
    <property type="component" value="Chromosome"/>
</dbReference>
<dbReference type="GO" id="GO:0005886">
    <property type="term" value="C:plasma membrane"/>
    <property type="evidence" value="ECO:0007669"/>
    <property type="project" value="UniProtKB-SubCell"/>
</dbReference>
<dbReference type="GO" id="GO:0051539">
    <property type="term" value="F:4 iron, 4 sulfur cluster binding"/>
    <property type="evidence" value="ECO:0007669"/>
    <property type="project" value="UniProtKB-KW"/>
</dbReference>
<dbReference type="GO" id="GO:0005506">
    <property type="term" value="F:iron ion binding"/>
    <property type="evidence" value="ECO:0007669"/>
    <property type="project" value="UniProtKB-UniRule"/>
</dbReference>
<dbReference type="GO" id="GO:0050136">
    <property type="term" value="F:NADH:ubiquinone reductase (non-electrogenic) activity"/>
    <property type="evidence" value="ECO:0007669"/>
    <property type="project" value="UniProtKB-UniRule"/>
</dbReference>
<dbReference type="GO" id="GO:0048038">
    <property type="term" value="F:quinone binding"/>
    <property type="evidence" value="ECO:0007669"/>
    <property type="project" value="UniProtKB-KW"/>
</dbReference>
<dbReference type="GO" id="GO:0009060">
    <property type="term" value="P:aerobic respiration"/>
    <property type="evidence" value="ECO:0007669"/>
    <property type="project" value="TreeGrafter"/>
</dbReference>
<dbReference type="FunFam" id="3.30.70.3270:FF:000002">
    <property type="entry name" value="NADH-quinone oxidoreductase subunit I"/>
    <property type="match status" value="1"/>
</dbReference>
<dbReference type="Gene3D" id="3.30.70.3270">
    <property type="match status" value="1"/>
</dbReference>
<dbReference type="HAMAP" id="MF_01351">
    <property type="entry name" value="NDH1_NuoI"/>
    <property type="match status" value="1"/>
</dbReference>
<dbReference type="InterPro" id="IPR017896">
    <property type="entry name" value="4Fe4S_Fe-S-bd"/>
</dbReference>
<dbReference type="InterPro" id="IPR017900">
    <property type="entry name" value="4Fe4S_Fe_S_CS"/>
</dbReference>
<dbReference type="InterPro" id="IPR010226">
    <property type="entry name" value="NADH_quinone_OxRdtase_chainI"/>
</dbReference>
<dbReference type="NCBIfam" id="TIGR01971">
    <property type="entry name" value="NuoI"/>
    <property type="match status" value="1"/>
</dbReference>
<dbReference type="NCBIfam" id="NF004536">
    <property type="entry name" value="PRK05888.1-1"/>
    <property type="match status" value="1"/>
</dbReference>
<dbReference type="PANTHER" id="PTHR10849:SF20">
    <property type="entry name" value="NADH DEHYDROGENASE [UBIQUINONE] IRON-SULFUR PROTEIN 8, MITOCHONDRIAL"/>
    <property type="match status" value="1"/>
</dbReference>
<dbReference type="PANTHER" id="PTHR10849">
    <property type="entry name" value="NADH DEHYDROGENASE UBIQUINONE IRON-SULFUR PROTEIN 8, MITOCHONDRIAL"/>
    <property type="match status" value="1"/>
</dbReference>
<dbReference type="Pfam" id="PF12838">
    <property type="entry name" value="Fer4_7"/>
    <property type="match status" value="1"/>
</dbReference>
<dbReference type="SUPFAM" id="SSF54862">
    <property type="entry name" value="4Fe-4S ferredoxins"/>
    <property type="match status" value="1"/>
</dbReference>
<dbReference type="PROSITE" id="PS00198">
    <property type="entry name" value="4FE4S_FER_1"/>
    <property type="match status" value="2"/>
</dbReference>
<dbReference type="PROSITE" id="PS51379">
    <property type="entry name" value="4FE4S_FER_2"/>
    <property type="match status" value="2"/>
</dbReference>
<name>NUOI1_NITMU</name>
<gene>
    <name evidence="1" type="primary">nuoI1</name>
    <name type="ordered locus">Nmul_A1020</name>
</gene>
<reference key="1">
    <citation type="submission" date="2005-08" db="EMBL/GenBank/DDBJ databases">
        <title>Complete sequence of chromosome 1 of Nitrosospira multiformis ATCC 25196.</title>
        <authorList>
            <person name="Copeland A."/>
            <person name="Lucas S."/>
            <person name="Lapidus A."/>
            <person name="Barry K."/>
            <person name="Detter J.C."/>
            <person name="Glavina T."/>
            <person name="Hammon N."/>
            <person name="Israni S."/>
            <person name="Pitluck S."/>
            <person name="Chain P."/>
            <person name="Malfatti S."/>
            <person name="Shin M."/>
            <person name="Vergez L."/>
            <person name="Schmutz J."/>
            <person name="Larimer F."/>
            <person name="Land M."/>
            <person name="Hauser L."/>
            <person name="Kyrpides N."/>
            <person name="Lykidis A."/>
            <person name="Richardson P."/>
        </authorList>
    </citation>
    <scope>NUCLEOTIDE SEQUENCE [LARGE SCALE GENOMIC DNA]</scope>
    <source>
        <strain>ATCC 25196 / NCIMB 11849 / C 71</strain>
    </source>
</reference>
<protein>
    <recommendedName>
        <fullName evidence="1">NADH-quinone oxidoreductase subunit I 1</fullName>
        <ecNumber evidence="1">7.1.1.-</ecNumber>
    </recommendedName>
    <alternativeName>
        <fullName evidence="1">NADH dehydrogenase I subunit I 1</fullName>
    </alternativeName>
    <alternativeName>
        <fullName evidence="1">NDH-1 subunit I 1</fullName>
    </alternativeName>
</protein>